<evidence type="ECO:0000250" key="1"/>
<evidence type="ECO:0000305" key="2"/>
<organism>
    <name type="scientific">Mycoplasma pneumoniae (strain ATCC 29342 / M129 / Subtype 1)</name>
    <name type="common">Mycoplasmoides pneumoniae</name>
    <dbReference type="NCBI Taxonomy" id="272634"/>
    <lineage>
        <taxon>Bacteria</taxon>
        <taxon>Bacillati</taxon>
        <taxon>Mycoplasmatota</taxon>
        <taxon>Mycoplasmoidales</taxon>
        <taxon>Mycoplasmoidaceae</taxon>
        <taxon>Mycoplasmoides</taxon>
    </lineage>
</organism>
<dbReference type="EMBL" id="U00089">
    <property type="protein sequence ID" value="AAB96161.1"/>
    <property type="molecule type" value="Genomic_DNA"/>
</dbReference>
<dbReference type="PIR" id="S73839">
    <property type="entry name" value="S73839"/>
</dbReference>
<dbReference type="RefSeq" id="NP_110011.1">
    <property type="nucleotide sequence ID" value="NC_000912.1"/>
</dbReference>
<dbReference type="RefSeq" id="WP_010874679.1">
    <property type="nucleotide sequence ID" value="NZ_OU342337.1"/>
</dbReference>
<dbReference type="SMR" id="P75460"/>
<dbReference type="IntAct" id="P75460">
    <property type="interactions" value="2"/>
</dbReference>
<dbReference type="STRING" id="272634.MPN_323"/>
<dbReference type="EnsemblBacteria" id="AAB96161">
    <property type="protein sequence ID" value="AAB96161"/>
    <property type="gene ID" value="MPN_323"/>
</dbReference>
<dbReference type="KEGG" id="mpn:MPN_323"/>
<dbReference type="PATRIC" id="fig|272634.6.peg.347"/>
<dbReference type="HOGENOM" id="CLU_114845_0_0_14"/>
<dbReference type="OrthoDB" id="350535at2"/>
<dbReference type="BioCyc" id="MPNE272634:G1GJ3-514-MONOMER"/>
<dbReference type="Proteomes" id="UP000000808">
    <property type="component" value="Chromosome"/>
</dbReference>
<dbReference type="GO" id="GO:0010181">
    <property type="term" value="F:FMN binding"/>
    <property type="evidence" value="ECO:0007669"/>
    <property type="project" value="InterPro"/>
</dbReference>
<dbReference type="GO" id="GO:0036211">
    <property type="term" value="P:protein modification process"/>
    <property type="evidence" value="ECO:0007669"/>
    <property type="project" value="InterPro"/>
</dbReference>
<dbReference type="Gene3D" id="3.40.50.360">
    <property type="match status" value="1"/>
</dbReference>
<dbReference type="HAMAP" id="MF_00128">
    <property type="entry name" value="NrdI"/>
    <property type="match status" value="1"/>
</dbReference>
<dbReference type="InterPro" id="IPR029039">
    <property type="entry name" value="Flavoprotein-like_sf"/>
</dbReference>
<dbReference type="InterPro" id="IPR020852">
    <property type="entry name" value="RNR_Ib_NrdI_bac"/>
</dbReference>
<dbReference type="InterPro" id="IPR004465">
    <property type="entry name" value="RNR_NrdI"/>
</dbReference>
<dbReference type="NCBIfam" id="TIGR00333">
    <property type="entry name" value="nrdI"/>
    <property type="match status" value="1"/>
</dbReference>
<dbReference type="PANTHER" id="PTHR37297">
    <property type="entry name" value="PROTEIN NRDI"/>
    <property type="match status" value="1"/>
</dbReference>
<dbReference type="PANTHER" id="PTHR37297:SF1">
    <property type="entry name" value="PROTEIN NRDI"/>
    <property type="match status" value="1"/>
</dbReference>
<dbReference type="Pfam" id="PF07972">
    <property type="entry name" value="Flavodoxin_NdrI"/>
    <property type="match status" value="1"/>
</dbReference>
<dbReference type="PIRSF" id="PIRSF005087">
    <property type="entry name" value="NrdI"/>
    <property type="match status" value="1"/>
</dbReference>
<dbReference type="SUPFAM" id="SSF52218">
    <property type="entry name" value="Flavoproteins"/>
    <property type="match status" value="1"/>
</dbReference>
<name>NRDI_MYCPN</name>
<proteinExistence type="inferred from homology"/>
<keyword id="KW-1185">Reference proteome</keyword>
<comment type="function">
    <text evidence="1">Probably involved in ribonucleotide reductase function.</text>
</comment>
<comment type="similarity">
    <text evidence="2">Belongs to the NrdI family.</text>
</comment>
<protein>
    <recommendedName>
        <fullName>Protein NrdI</fullName>
    </recommendedName>
</protein>
<gene>
    <name type="primary">nrdI</name>
    <name type="ordered locus">MPN_323</name>
    <name type="ORF">MP513</name>
</gene>
<reference key="1">
    <citation type="journal article" date="1996" name="Nucleic Acids Res.">
        <title>Complete sequence analysis of the genome of the bacterium Mycoplasma pneumoniae.</title>
        <authorList>
            <person name="Himmelreich R."/>
            <person name="Hilbert H."/>
            <person name="Plagens H."/>
            <person name="Pirkl E."/>
            <person name="Li B.-C."/>
            <person name="Herrmann R."/>
        </authorList>
    </citation>
    <scope>NUCLEOTIDE SEQUENCE [LARGE SCALE GENOMIC DNA]</scope>
    <source>
        <strain>ATCC 29342 / M129 / Subtype 1</strain>
    </source>
</reference>
<accession>P75460</accession>
<sequence length="153" mass="17151">MHKDIKIVDASAIVKPTGTPYVVYFSSISNNTHRFIEKLEFEHTRIPVNLDEQIEVNQEYVLFCPTYSGGGEYTSGAVPKQVIHFLNNKHNRDLCRGVISSGNTNFGNTFAIAGPILSKKLNVPLLYQFELLGTKNDVEQVQTIITNFFGKAK</sequence>
<feature type="chain" id="PRO_0000164323" description="Protein NrdI">
    <location>
        <begin position="1"/>
        <end position="153"/>
    </location>
</feature>